<gene>
    <name evidence="1" type="primary">dxs</name>
    <name type="ordered locus">P9211_08521</name>
</gene>
<accession>A9BAC1</accession>
<dbReference type="EC" id="2.2.1.7" evidence="1"/>
<dbReference type="EMBL" id="CP000878">
    <property type="protein sequence ID" value="ABX08783.1"/>
    <property type="molecule type" value="Genomic_DNA"/>
</dbReference>
<dbReference type="RefSeq" id="WP_012195405.1">
    <property type="nucleotide sequence ID" value="NC_009976.1"/>
</dbReference>
<dbReference type="SMR" id="A9BAC1"/>
<dbReference type="STRING" id="93059.P9211_08521"/>
<dbReference type="KEGG" id="pmj:P9211_08521"/>
<dbReference type="eggNOG" id="COG1154">
    <property type="taxonomic scope" value="Bacteria"/>
</dbReference>
<dbReference type="HOGENOM" id="CLU_009227_1_4_3"/>
<dbReference type="OrthoDB" id="9803371at2"/>
<dbReference type="UniPathway" id="UPA00064">
    <property type="reaction ID" value="UER00091"/>
</dbReference>
<dbReference type="Proteomes" id="UP000000788">
    <property type="component" value="Chromosome"/>
</dbReference>
<dbReference type="GO" id="GO:0005829">
    <property type="term" value="C:cytosol"/>
    <property type="evidence" value="ECO:0007669"/>
    <property type="project" value="TreeGrafter"/>
</dbReference>
<dbReference type="GO" id="GO:0008661">
    <property type="term" value="F:1-deoxy-D-xylulose-5-phosphate synthase activity"/>
    <property type="evidence" value="ECO:0007669"/>
    <property type="project" value="UniProtKB-UniRule"/>
</dbReference>
<dbReference type="GO" id="GO:0000287">
    <property type="term" value="F:magnesium ion binding"/>
    <property type="evidence" value="ECO:0007669"/>
    <property type="project" value="UniProtKB-UniRule"/>
</dbReference>
<dbReference type="GO" id="GO:0030976">
    <property type="term" value="F:thiamine pyrophosphate binding"/>
    <property type="evidence" value="ECO:0007669"/>
    <property type="project" value="UniProtKB-UniRule"/>
</dbReference>
<dbReference type="GO" id="GO:0052865">
    <property type="term" value="P:1-deoxy-D-xylulose 5-phosphate biosynthetic process"/>
    <property type="evidence" value="ECO:0007669"/>
    <property type="project" value="UniProtKB-UniPathway"/>
</dbReference>
<dbReference type="GO" id="GO:0019288">
    <property type="term" value="P:isopentenyl diphosphate biosynthetic process, methylerythritol 4-phosphate pathway"/>
    <property type="evidence" value="ECO:0007669"/>
    <property type="project" value="TreeGrafter"/>
</dbReference>
<dbReference type="GO" id="GO:0016114">
    <property type="term" value="P:terpenoid biosynthetic process"/>
    <property type="evidence" value="ECO:0007669"/>
    <property type="project" value="UniProtKB-UniRule"/>
</dbReference>
<dbReference type="GO" id="GO:0009228">
    <property type="term" value="P:thiamine biosynthetic process"/>
    <property type="evidence" value="ECO:0007669"/>
    <property type="project" value="UniProtKB-UniRule"/>
</dbReference>
<dbReference type="CDD" id="cd02007">
    <property type="entry name" value="TPP_DXS"/>
    <property type="match status" value="1"/>
</dbReference>
<dbReference type="CDD" id="cd07033">
    <property type="entry name" value="TPP_PYR_DXS_TK_like"/>
    <property type="match status" value="1"/>
</dbReference>
<dbReference type="FunFam" id="3.40.50.920:FF:000002">
    <property type="entry name" value="1-deoxy-D-xylulose-5-phosphate synthase"/>
    <property type="match status" value="1"/>
</dbReference>
<dbReference type="FunFam" id="3.40.50.970:FF:000005">
    <property type="entry name" value="1-deoxy-D-xylulose-5-phosphate synthase"/>
    <property type="match status" value="1"/>
</dbReference>
<dbReference type="Gene3D" id="3.40.50.920">
    <property type="match status" value="1"/>
</dbReference>
<dbReference type="Gene3D" id="3.40.50.970">
    <property type="match status" value="2"/>
</dbReference>
<dbReference type="HAMAP" id="MF_00315">
    <property type="entry name" value="DXP_synth"/>
    <property type="match status" value="1"/>
</dbReference>
<dbReference type="InterPro" id="IPR005477">
    <property type="entry name" value="Dxylulose-5-P_synthase"/>
</dbReference>
<dbReference type="InterPro" id="IPR029061">
    <property type="entry name" value="THDP-binding"/>
</dbReference>
<dbReference type="InterPro" id="IPR009014">
    <property type="entry name" value="Transketo_C/PFOR_II"/>
</dbReference>
<dbReference type="InterPro" id="IPR005475">
    <property type="entry name" value="Transketolase-like_Pyr-bd"/>
</dbReference>
<dbReference type="InterPro" id="IPR020826">
    <property type="entry name" value="Transketolase_BS"/>
</dbReference>
<dbReference type="InterPro" id="IPR033248">
    <property type="entry name" value="Transketolase_C"/>
</dbReference>
<dbReference type="InterPro" id="IPR049557">
    <property type="entry name" value="Transketolase_CS"/>
</dbReference>
<dbReference type="NCBIfam" id="TIGR00204">
    <property type="entry name" value="dxs"/>
    <property type="match status" value="1"/>
</dbReference>
<dbReference type="NCBIfam" id="NF003933">
    <property type="entry name" value="PRK05444.2-2"/>
    <property type="match status" value="1"/>
</dbReference>
<dbReference type="PANTHER" id="PTHR43322">
    <property type="entry name" value="1-D-DEOXYXYLULOSE 5-PHOSPHATE SYNTHASE-RELATED"/>
    <property type="match status" value="1"/>
</dbReference>
<dbReference type="PANTHER" id="PTHR43322:SF5">
    <property type="entry name" value="1-DEOXY-D-XYLULOSE-5-PHOSPHATE SYNTHASE, CHLOROPLASTIC"/>
    <property type="match status" value="1"/>
</dbReference>
<dbReference type="Pfam" id="PF13292">
    <property type="entry name" value="DXP_synthase_N"/>
    <property type="match status" value="1"/>
</dbReference>
<dbReference type="Pfam" id="PF02779">
    <property type="entry name" value="Transket_pyr"/>
    <property type="match status" value="1"/>
</dbReference>
<dbReference type="Pfam" id="PF02780">
    <property type="entry name" value="Transketolase_C"/>
    <property type="match status" value="1"/>
</dbReference>
<dbReference type="SMART" id="SM00861">
    <property type="entry name" value="Transket_pyr"/>
    <property type="match status" value="1"/>
</dbReference>
<dbReference type="SUPFAM" id="SSF52518">
    <property type="entry name" value="Thiamin diphosphate-binding fold (THDP-binding)"/>
    <property type="match status" value="2"/>
</dbReference>
<dbReference type="SUPFAM" id="SSF52922">
    <property type="entry name" value="TK C-terminal domain-like"/>
    <property type="match status" value="1"/>
</dbReference>
<dbReference type="PROSITE" id="PS00801">
    <property type="entry name" value="TRANSKETOLASE_1"/>
    <property type="match status" value="1"/>
</dbReference>
<dbReference type="PROSITE" id="PS00802">
    <property type="entry name" value="TRANSKETOLASE_2"/>
    <property type="match status" value="1"/>
</dbReference>
<evidence type="ECO:0000255" key="1">
    <source>
        <dbReference type="HAMAP-Rule" id="MF_00315"/>
    </source>
</evidence>
<feature type="chain" id="PRO_1000115756" description="1-deoxy-D-xylulose-5-phosphate synthase">
    <location>
        <begin position="1"/>
        <end position="643"/>
    </location>
</feature>
<feature type="binding site" evidence="1">
    <location>
        <position position="72"/>
    </location>
    <ligand>
        <name>thiamine diphosphate</name>
        <dbReference type="ChEBI" id="CHEBI:58937"/>
    </ligand>
</feature>
<feature type="binding site" evidence="1">
    <location>
        <begin position="113"/>
        <end position="115"/>
    </location>
    <ligand>
        <name>thiamine diphosphate</name>
        <dbReference type="ChEBI" id="CHEBI:58937"/>
    </ligand>
</feature>
<feature type="binding site" evidence="1">
    <location>
        <position position="144"/>
    </location>
    <ligand>
        <name>Mg(2+)</name>
        <dbReference type="ChEBI" id="CHEBI:18420"/>
    </ligand>
</feature>
<feature type="binding site" evidence="1">
    <location>
        <begin position="145"/>
        <end position="146"/>
    </location>
    <ligand>
        <name>thiamine diphosphate</name>
        <dbReference type="ChEBI" id="CHEBI:58937"/>
    </ligand>
</feature>
<feature type="binding site" evidence="1">
    <location>
        <position position="174"/>
    </location>
    <ligand>
        <name>Mg(2+)</name>
        <dbReference type="ChEBI" id="CHEBI:18420"/>
    </ligand>
</feature>
<feature type="binding site" evidence="1">
    <location>
        <position position="174"/>
    </location>
    <ligand>
        <name>thiamine diphosphate</name>
        <dbReference type="ChEBI" id="CHEBI:58937"/>
    </ligand>
</feature>
<feature type="binding site" evidence="1">
    <location>
        <position position="287"/>
    </location>
    <ligand>
        <name>thiamine diphosphate</name>
        <dbReference type="ChEBI" id="CHEBI:58937"/>
    </ligand>
</feature>
<feature type="binding site" evidence="1">
    <location>
        <position position="370"/>
    </location>
    <ligand>
        <name>thiamine diphosphate</name>
        <dbReference type="ChEBI" id="CHEBI:58937"/>
    </ligand>
</feature>
<reference key="1">
    <citation type="journal article" date="2007" name="PLoS Genet.">
        <title>Patterns and implications of gene gain and loss in the evolution of Prochlorococcus.</title>
        <authorList>
            <person name="Kettler G.C."/>
            <person name="Martiny A.C."/>
            <person name="Huang K."/>
            <person name="Zucker J."/>
            <person name="Coleman M.L."/>
            <person name="Rodrigue S."/>
            <person name="Chen F."/>
            <person name="Lapidus A."/>
            <person name="Ferriera S."/>
            <person name="Johnson J."/>
            <person name="Steglich C."/>
            <person name="Church G.M."/>
            <person name="Richardson P."/>
            <person name="Chisholm S.W."/>
        </authorList>
    </citation>
    <scope>NUCLEOTIDE SEQUENCE [LARGE SCALE GENOMIC DNA]</scope>
    <source>
        <strain>MIT 9211</strain>
    </source>
</reference>
<proteinExistence type="inferred from homology"/>
<protein>
    <recommendedName>
        <fullName evidence="1">1-deoxy-D-xylulose-5-phosphate synthase</fullName>
        <ecNumber evidence="1">2.2.1.7</ecNumber>
    </recommendedName>
    <alternativeName>
        <fullName evidence="1">1-deoxyxylulose-5-phosphate synthase</fullName>
        <shortName evidence="1">DXP synthase</shortName>
        <shortName evidence="1">DXPS</shortName>
    </alternativeName>
</protein>
<name>DXS_PROM4</name>
<keyword id="KW-0414">Isoprene biosynthesis</keyword>
<keyword id="KW-0460">Magnesium</keyword>
<keyword id="KW-0479">Metal-binding</keyword>
<keyword id="KW-1185">Reference proteome</keyword>
<keyword id="KW-0784">Thiamine biosynthesis</keyword>
<keyword id="KW-0786">Thiamine pyrophosphate</keyword>
<keyword id="KW-0808">Transferase</keyword>
<comment type="function">
    <text evidence="1">Catalyzes the acyloin condensation reaction between C atoms 2 and 3 of pyruvate and glyceraldehyde 3-phosphate to yield 1-deoxy-D-xylulose-5-phosphate (DXP).</text>
</comment>
<comment type="catalytic activity">
    <reaction evidence="1">
        <text>D-glyceraldehyde 3-phosphate + pyruvate + H(+) = 1-deoxy-D-xylulose 5-phosphate + CO2</text>
        <dbReference type="Rhea" id="RHEA:12605"/>
        <dbReference type="ChEBI" id="CHEBI:15361"/>
        <dbReference type="ChEBI" id="CHEBI:15378"/>
        <dbReference type="ChEBI" id="CHEBI:16526"/>
        <dbReference type="ChEBI" id="CHEBI:57792"/>
        <dbReference type="ChEBI" id="CHEBI:59776"/>
        <dbReference type="EC" id="2.2.1.7"/>
    </reaction>
</comment>
<comment type="cofactor">
    <cofactor evidence="1">
        <name>Mg(2+)</name>
        <dbReference type="ChEBI" id="CHEBI:18420"/>
    </cofactor>
    <text evidence="1">Binds 1 Mg(2+) ion per subunit.</text>
</comment>
<comment type="cofactor">
    <cofactor evidence="1">
        <name>thiamine diphosphate</name>
        <dbReference type="ChEBI" id="CHEBI:58937"/>
    </cofactor>
    <text evidence="1">Binds 1 thiamine pyrophosphate per subunit.</text>
</comment>
<comment type="pathway">
    <text evidence="1">Metabolic intermediate biosynthesis; 1-deoxy-D-xylulose 5-phosphate biosynthesis; 1-deoxy-D-xylulose 5-phosphate from D-glyceraldehyde 3-phosphate and pyruvate: step 1/1.</text>
</comment>
<comment type="subunit">
    <text evidence="1">Homodimer.</text>
</comment>
<comment type="similarity">
    <text evidence="1">Belongs to the transketolase family. DXPS subfamily.</text>
</comment>
<organism>
    <name type="scientific">Prochlorococcus marinus (strain MIT 9211)</name>
    <dbReference type="NCBI Taxonomy" id="93059"/>
    <lineage>
        <taxon>Bacteria</taxon>
        <taxon>Bacillati</taxon>
        <taxon>Cyanobacteriota</taxon>
        <taxon>Cyanophyceae</taxon>
        <taxon>Synechococcales</taxon>
        <taxon>Prochlorococcaceae</taxon>
        <taxon>Prochlorococcus</taxon>
    </lineage>
</organism>
<sequence length="643" mass="68968">MRLSELSHPNQLHGLTIAQLEDIACQIRERHLQVVSTSGGHLGPGLGVVELTIALYQTLDLDVDKVVWDVGHQAYPHKLITGRYENFNTLRQKGGVAGYLKRSESTFDHFGAGHASTSISAALGMAFARDRLGLNHKCVAVIGDGALTGGMALEAINHAGHLPNTPFLVVLNDNDMSISPPVGALSTYLNRMRHSAPVQFISDSVQESVKNLPFIGGEIPPEIKSLTGSVKRLAVPKVGAVFEELGFTYMGPIDGHDISRMIRTFQAAHRVGGPVLVHVATTKGKGYPYAEADQVGYHAQSAFDLTTGKSIPSKSPKPPSYSKVFGQTLVKICEQNNKVIGITAAMATGTGLDLLQKAIPNQYVDVGIAEQHAVTLAAGMACDGLRPVVAIYSTFLQRAYDQLIHDVGIQKLPVTFVLDRAGIVGADGPTHQGQYDISYLRSVPNFTVMAPKDEAELQRMLVTCLENDGPCALRIPRGSGEGVTLMEEGWEPLKIGRGEILEDGDDLLILAYGSMVTPAVQTAELLKQAGISSTVVNARFLRPLDQALIHPLARRIGKVVTIEEGALGGGFGSAVVESFSDQDLLVPTFRLGIPDKLVDHASPQQSKESLGLTPSQMSKSIMKRYGWDTSDSLFLSNSNTSSA</sequence>